<sequence>MSFTVVIPARYGSSRLPGKPLADIAGKPMIQHVVERAEASGAAEVIVATDDMRIKEGVDKFGGRVMMTSSEHSSGTERLAEVIEQLALAENEVVVNVQGDEPFIPPEIIRQVADNLANQRQAPMATLAVPITDAEDIFNPNTVKVVTDAAGYALYFSRAAIPWDREHFSADRATNVVTEHYHRHIGIYAYRAGFVRRYIEWEPSPIEQLESLEQLRVLWHGERIHVAEAILAPATGIDTEEDLQRARKLAGDG</sequence>
<organism>
    <name type="scientific">Idiomarina loihiensis (strain ATCC BAA-735 / DSM 15497 / L2-TR)</name>
    <dbReference type="NCBI Taxonomy" id="283942"/>
    <lineage>
        <taxon>Bacteria</taxon>
        <taxon>Pseudomonadati</taxon>
        <taxon>Pseudomonadota</taxon>
        <taxon>Gammaproteobacteria</taxon>
        <taxon>Alteromonadales</taxon>
        <taxon>Idiomarinaceae</taxon>
        <taxon>Idiomarina</taxon>
    </lineage>
</organism>
<proteinExistence type="inferred from homology"/>
<dbReference type="EC" id="2.7.7.38" evidence="1"/>
<dbReference type="EMBL" id="AE017340">
    <property type="protein sequence ID" value="AAV82348.1"/>
    <property type="molecule type" value="Genomic_DNA"/>
</dbReference>
<dbReference type="RefSeq" id="WP_011234753.1">
    <property type="nucleotide sequence ID" value="NC_006512.1"/>
</dbReference>
<dbReference type="SMR" id="Q5QU39"/>
<dbReference type="STRING" id="283942.IL1510"/>
<dbReference type="GeneID" id="41336687"/>
<dbReference type="KEGG" id="ilo:IL1510"/>
<dbReference type="eggNOG" id="COG1212">
    <property type="taxonomic scope" value="Bacteria"/>
</dbReference>
<dbReference type="HOGENOM" id="CLU_065038_1_0_6"/>
<dbReference type="OrthoDB" id="9815559at2"/>
<dbReference type="UniPathway" id="UPA00030"/>
<dbReference type="UniPathway" id="UPA00358">
    <property type="reaction ID" value="UER00476"/>
</dbReference>
<dbReference type="Proteomes" id="UP000001171">
    <property type="component" value="Chromosome"/>
</dbReference>
<dbReference type="GO" id="GO:0005829">
    <property type="term" value="C:cytosol"/>
    <property type="evidence" value="ECO:0007669"/>
    <property type="project" value="TreeGrafter"/>
</dbReference>
<dbReference type="GO" id="GO:0008690">
    <property type="term" value="F:3-deoxy-manno-octulosonate cytidylyltransferase activity"/>
    <property type="evidence" value="ECO:0007669"/>
    <property type="project" value="UniProtKB-UniRule"/>
</dbReference>
<dbReference type="GO" id="GO:0033468">
    <property type="term" value="P:CMP-keto-3-deoxy-D-manno-octulosonic acid biosynthetic process"/>
    <property type="evidence" value="ECO:0007669"/>
    <property type="project" value="UniProtKB-UniRule"/>
</dbReference>
<dbReference type="GO" id="GO:0009103">
    <property type="term" value="P:lipopolysaccharide biosynthetic process"/>
    <property type="evidence" value="ECO:0007669"/>
    <property type="project" value="UniProtKB-UniRule"/>
</dbReference>
<dbReference type="CDD" id="cd02517">
    <property type="entry name" value="CMP-KDO-Synthetase"/>
    <property type="match status" value="1"/>
</dbReference>
<dbReference type="FunFam" id="3.90.550.10:FF:000011">
    <property type="entry name" value="3-deoxy-manno-octulosonate cytidylyltransferase"/>
    <property type="match status" value="1"/>
</dbReference>
<dbReference type="Gene3D" id="3.90.550.10">
    <property type="entry name" value="Spore Coat Polysaccharide Biosynthesis Protein SpsA, Chain A"/>
    <property type="match status" value="1"/>
</dbReference>
<dbReference type="HAMAP" id="MF_00057">
    <property type="entry name" value="KdsB"/>
    <property type="match status" value="1"/>
</dbReference>
<dbReference type="InterPro" id="IPR003329">
    <property type="entry name" value="Cytidylyl_trans"/>
</dbReference>
<dbReference type="InterPro" id="IPR004528">
    <property type="entry name" value="KdsB"/>
</dbReference>
<dbReference type="InterPro" id="IPR029044">
    <property type="entry name" value="Nucleotide-diphossugar_trans"/>
</dbReference>
<dbReference type="NCBIfam" id="TIGR00466">
    <property type="entry name" value="kdsB"/>
    <property type="match status" value="1"/>
</dbReference>
<dbReference type="NCBIfam" id="NF003950">
    <property type="entry name" value="PRK05450.1-3"/>
    <property type="match status" value="1"/>
</dbReference>
<dbReference type="NCBIfam" id="NF003952">
    <property type="entry name" value="PRK05450.1-5"/>
    <property type="match status" value="1"/>
</dbReference>
<dbReference type="NCBIfam" id="NF009905">
    <property type="entry name" value="PRK13368.1"/>
    <property type="match status" value="1"/>
</dbReference>
<dbReference type="PANTHER" id="PTHR42866">
    <property type="entry name" value="3-DEOXY-MANNO-OCTULOSONATE CYTIDYLYLTRANSFERASE"/>
    <property type="match status" value="1"/>
</dbReference>
<dbReference type="PANTHER" id="PTHR42866:SF2">
    <property type="entry name" value="3-DEOXY-MANNO-OCTULOSONATE CYTIDYLYLTRANSFERASE, MITOCHONDRIAL"/>
    <property type="match status" value="1"/>
</dbReference>
<dbReference type="Pfam" id="PF02348">
    <property type="entry name" value="CTP_transf_3"/>
    <property type="match status" value="1"/>
</dbReference>
<dbReference type="SUPFAM" id="SSF53448">
    <property type="entry name" value="Nucleotide-diphospho-sugar transferases"/>
    <property type="match status" value="1"/>
</dbReference>
<accession>Q5QU39</accession>
<keyword id="KW-0963">Cytoplasm</keyword>
<keyword id="KW-0448">Lipopolysaccharide biosynthesis</keyword>
<keyword id="KW-0548">Nucleotidyltransferase</keyword>
<keyword id="KW-1185">Reference proteome</keyword>
<keyword id="KW-0808">Transferase</keyword>
<evidence type="ECO:0000255" key="1">
    <source>
        <dbReference type="HAMAP-Rule" id="MF_00057"/>
    </source>
</evidence>
<protein>
    <recommendedName>
        <fullName evidence="1">3-deoxy-manno-octulosonate cytidylyltransferase</fullName>
        <ecNumber evidence="1">2.7.7.38</ecNumber>
    </recommendedName>
    <alternativeName>
        <fullName evidence="1">CMP-2-keto-3-deoxyoctulosonic acid synthase</fullName>
        <shortName evidence="1">CKS</shortName>
        <shortName evidence="1">CMP-KDO synthase</shortName>
    </alternativeName>
</protein>
<name>KDSB_IDILO</name>
<gene>
    <name evidence="1" type="primary">kdsB</name>
    <name type="ordered locus">IL1510</name>
</gene>
<comment type="function">
    <text evidence="1">Activates KDO (a required 8-carbon sugar) for incorporation into bacterial lipopolysaccharide in Gram-negative bacteria.</text>
</comment>
<comment type="catalytic activity">
    <reaction evidence="1">
        <text>3-deoxy-alpha-D-manno-oct-2-ulosonate + CTP = CMP-3-deoxy-beta-D-manno-octulosonate + diphosphate</text>
        <dbReference type="Rhea" id="RHEA:23448"/>
        <dbReference type="ChEBI" id="CHEBI:33019"/>
        <dbReference type="ChEBI" id="CHEBI:37563"/>
        <dbReference type="ChEBI" id="CHEBI:85986"/>
        <dbReference type="ChEBI" id="CHEBI:85987"/>
        <dbReference type="EC" id="2.7.7.38"/>
    </reaction>
</comment>
<comment type="pathway">
    <text evidence="1">Nucleotide-sugar biosynthesis; CMP-3-deoxy-D-manno-octulosonate biosynthesis; CMP-3-deoxy-D-manno-octulosonate from 3-deoxy-D-manno-octulosonate and CTP: step 1/1.</text>
</comment>
<comment type="pathway">
    <text evidence="1">Bacterial outer membrane biogenesis; lipopolysaccharide biosynthesis.</text>
</comment>
<comment type="subcellular location">
    <subcellularLocation>
        <location evidence="1">Cytoplasm</location>
    </subcellularLocation>
</comment>
<comment type="similarity">
    <text evidence="1">Belongs to the KdsB family.</text>
</comment>
<reference key="1">
    <citation type="journal article" date="2004" name="Proc. Natl. Acad. Sci. U.S.A.">
        <title>Genome sequence of the deep-sea gamma-proteobacterium Idiomarina loihiensis reveals amino acid fermentation as a source of carbon and energy.</title>
        <authorList>
            <person name="Hou S."/>
            <person name="Saw J.H."/>
            <person name="Lee K.S."/>
            <person name="Freitas T.A."/>
            <person name="Belisle C."/>
            <person name="Kawarabayasi Y."/>
            <person name="Donachie S.P."/>
            <person name="Pikina A."/>
            <person name="Galperin M.Y."/>
            <person name="Koonin E.V."/>
            <person name="Makarova K.S."/>
            <person name="Omelchenko M.V."/>
            <person name="Sorokin A."/>
            <person name="Wolf Y.I."/>
            <person name="Li Q.X."/>
            <person name="Keum Y.S."/>
            <person name="Campbell S."/>
            <person name="Denery J."/>
            <person name="Aizawa S."/>
            <person name="Shibata S."/>
            <person name="Malahoff A."/>
            <person name="Alam M."/>
        </authorList>
    </citation>
    <scope>NUCLEOTIDE SEQUENCE [LARGE SCALE GENOMIC DNA]</scope>
    <source>
        <strain>ATCC BAA-735 / DSM 15497 / L2-TR</strain>
    </source>
</reference>
<feature type="chain" id="PRO_1000003366" description="3-deoxy-manno-octulosonate cytidylyltransferase">
    <location>
        <begin position="1"/>
        <end position="253"/>
    </location>
</feature>